<sequence length="175" mass="18810">MGRTLANKQDIVTELKGLVDEAQMAFVVDYQGLTVAEITDLRNRLEASNSVCKVTKNTLMRRAIADADDWQPLTELLKGTNAFVLVKDDPGSAIKAYQAFQKDTKKTELRGGLLEGRLLSSDELKAIGDLPSKEVLIAQIAGAINGVATKLAVGIKEVPNSLARGIKAVSEQTDA</sequence>
<evidence type="ECO:0000255" key="1">
    <source>
        <dbReference type="HAMAP-Rule" id="MF_00362"/>
    </source>
</evidence>
<evidence type="ECO:0000305" key="2"/>
<protein>
    <recommendedName>
        <fullName evidence="1">Large ribosomal subunit protein uL10</fullName>
    </recommendedName>
    <alternativeName>
        <fullName evidence="2">50S ribosomal protein L10</fullName>
    </alternativeName>
</protein>
<organism>
    <name type="scientific">Synechococcus sp. (strain ATCC 27144 / PCC 6301 / SAUG 1402/1)</name>
    <name type="common">Anacystis nidulans</name>
    <dbReference type="NCBI Taxonomy" id="269084"/>
    <lineage>
        <taxon>Bacteria</taxon>
        <taxon>Bacillati</taxon>
        <taxon>Cyanobacteriota</taxon>
        <taxon>Cyanophyceae</taxon>
        <taxon>Synechococcales</taxon>
        <taxon>Synechococcaceae</taxon>
        <taxon>Synechococcus</taxon>
    </lineage>
</organism>
<gene>
    <name evidence="1" type="primary">rplJ</name>
    <name evidence="1" type="synonym">rpl10</name>
    <name type="ordered locus">syc0893_d</name>
</gene>
<accession>Q5N3N7</accession>
<feature type="chain" id="PRO_0000154731" description="Large ribosomal subunit protein uL10">
    <location>
        <begin position="1"/>
        <end position="175"/>
    </location>
</feature>
<reference key="1">
    <citation type="journal article" date="2007" name="Photosyn. Res.">
        <title>Complete nucleotide sequence of the freshwater unicellular cyanobacterium Synechococcus elongatus PCC 6301 chromosome: gene content and organization.</title>
        <authorList>
            <person name="Sugita C."/>
            <person name="Ogata K."/>
            <person name="Shikata M."/>
            <person name="Jikuya H."/>
            <person name="Takano J."/>
            <person name="Furumichi M."/>
            <person name="Kanehisa M."/>
            <person name="Omata T."/>
            <person name="Sugiura M."/>
            <person name="Sugita M."/>
        </authorList>
    </citation>
    <scope>NUCLEOTIDE SEQUENCE [LARGE SCALE GENOMIC DNA]</scope>
    <source>
        <strain>ATCC 27144 / PCC 6301 / SAUG 1402/1</strain>
    </source>
</reference>
<proteinExistence type="inferred from homology"/>
<dbReference type="EMBL" id="AP008231">
    <property type="protein sequence ID" value="BAD79083.1"/>
    <property type="molecule type" value="Genomic_DNA"/>
</dbReference>
<dbReference type="RefSeq" id="WP_011243205.1">
    <property type="nucleotide sequence ID" value="NZ_CP085785.1"/>
</dbReference>
<dbReference type="SMR" id="Q5N3N7"/>
<dbReference type="GeneID" id="72429465"/>
<dbReference type="KEGG" id="syc:syc0893_d"/>
<dbReference type="eggNOG" id="COG0244">
    <property type="taxonomic scope" value="Bacteria"/>
</dbReference>
<dbReference type="Proteomes" id="UP000001175">
    <property type="component" value="Chromosome"/>
</dbReference>
<dbReference type="GO" id="GO:0015934">
    <property type="term" value="C:large ribosomal subunit"/>
    <property type="evidence" value="ECO:0007669"/>
    <property type="project" value="InterPro"/>
</dbReference>
<dbReference type="GO" id="GO:0070180">
    <property type="term" value="F:large ribosomal subunit rRNA binding"/>
    <property type="evidence" value="ECO:0007669"/>
    <property type="project" value="UniProtKB-UniRule"/>
</dbReference>
<dbReference type="GO" id="GO:0003735">
    <property type="term" value="F:structural constituent of ribosome"/>
    <property type="evidence" value="ECO:0007669"/>
    <property type="project" value="InterPro"/>
</dbReference>
<dbReference type="GO" id="GO:0006412">
    <property type="term" value="P:translation"/>
    <property type="evidence" value="ECO:0007669"/>
    <property type="project" value="UniProtKB-UniRule"/>
</dbReference>
<dbReference type="CDD" id="cd05797">
    <property type="entry name" value="Ribosomal_L10"/>
    <property type="match status" value="1"/>
</dbReference>
<dbReference type="Gene3D" id="3.30.70.1730">
    <property type="match status" value="1"/>
</dbReference>
<dbReference type="Gene3D" id="6.10.250.290">
    <property type="match status" value="1"/>
</dbReference>
<dbReference type="HAMAP" id="MF_00362">
    <property type="entry name" value="Ribosomal_uL10"/>
    <property type="match status" value="1"/>
</dbReference>
<dbReference type="InterPro" id="IPR001790">
    <property type="entry name" value="Ribosomal_uL10"/>
</dbReference>
<dbReference type="InterPro" id="IPR043141">
    <property type="entry name" value="Ribosomal_uL10-like_sf"/>
</dbReference>
<dbReference type="InterPro" id="IPR022973">
    <property type="entry name" value="Ribosomal_uL10_bac"/>
</dbReference>
<dbReference type="InterPro" id="IPR047865">
    <property type="entry name" value="Ribosomal_uL10_bac_type"/>
</dbReference>
<dbReference type="InterPro" id="IPR002363">
    <property type="entry name" value="Ribosomal_uL10_CS_bac"/>
</dbReference>
<dbReference type="NCBIfam" id="NF000955">
    <property type="entry name" value="PRK00099.1-1"/>
    <property type="match status" value="1"/>
</dbReference>
<dbReference type="PANTHER" id="PTHR11560">
    <property type="entry name" value="39S RIBOSOMAL PROTEIN L10, MITOCHONDRIAL"/>
    <property type="match status" value="1"/>
</dbReference>
<dbReference type="Pfam" id="PF00466">
    <property type="entry name" value="Ribosomal_L10"/>
    <property type="match status" value="1"/>
</dbReference>
<dbReference type="SUPFAM" id="SSF160369">
    <property type="entry name" value="Ribosomal protein L10-like"/>
    <property type="match status" value="1"/>
</dbReference>
<dbReference type="PROSITE" id="PS01109">
    <property type="entry name" value="RIBOSOMAL_L10"/>
    <property type="match status" value="1"/>
</dbReference>
<comment type="function">
    <text evidence="1">Forms part of the ribosomal stalk, playing a central role in the interaction of the ribosome with GTP-bound translation factors.</text>
</comment>
<comment type="subunit">
    <text evidence="1">Part of the ribosomal stalk of the 50S ribosomal subunit. The N-terminus interacts with L11 and the large rRNA to form the base of the stalk. The C-terminus forms an elongated spine to which L12 dimers bind in a sequential fashion forming a multimeric L10(L12)X complex.</text>
</comment>
<comment type="similarity">
    <text evidence="1">Belongs to the universal ribosomal protein uL10 family.</text>
</comment>
<keyword id="KW-0687">Ribonucleoprotein</keyword>
<keyword id="KW-0689">Ribosomal protein</keyword>
<keyword id="KW-0694">RNA-binding</keyword>
<keyword id="KW-0699">rRNA-binding</keyword>
<name>RL10_SYNP6</name>